<organism>
    <name type="scientific">Rhodopseudomonas palustris (strain BisA53)</name>
    <dbReference type="NCBI Taxonomy" id="316055"/>
    <lineage>
        <taxon>Bacteria</taxon>
        <taxon>Pseudomonadati</taxon>
        <taxon>Pseudomonadota</taxon>
        <taxon>Alphaproteobacteria</taxon>
        <taxon>Hyphomicrobiales</taxon>
        <taxon>Nitrobacteraceae</taxon>
        <taxon>Rhodopseudomonas</taxon>
    </lineage>
</organism>
<proteinExistence type="inferred from homology"/>
<reference key="1">
    <citation type="submission" date="2006-09" db="EMBL/GenBank/DDBJ databases">
        <title>Complete sequence of Rhodopseudomonas palustris BisA53.</title>
        <authorList>
            <consortium name="US DOE Joint Genome Institute"/>
            <person name="Copeland A."/>
            <person name="Lucas S."/>
            <person name="Lapidus A."/>
            <person name="Barry K."/>
            <person name="Detter J.C."/>
            <person name="Glavina del Rio T."/>
            <person name="Hammon N."/>
            <person name="Israni S."/>
            <person name="Dalin E."/>
            <person name="Tice H."/>
            <person name="Pitluck S."/>
            <person name="Chain P."/>
            <person name="Malfatti S."/>
            <person name="Shin M."/>
            <person name="Vergez L."/>
            <person name="Schmutz J."/>
            <person name="Larimer F."/>
            <person name="Land M."/>
            <person name="Hauser L."/>
            <person name="Pelletier D.A."/>
            <person name="Kyrpides N."/>
            <person name="Kim E."/>
            <person name="Harwood C.S."/>
            <person name="Oda Y."/>
            <person name="Richardson P."/>
        </authorList>
    </citation>
    <scope>NUCLEOTIDE SEQUENCE [LARGE SCALE GENOMIC DNA]</scope>
    <source>
        <strain>BisA53</strain>
    </source>
</reference>
<sequence>MIRAFDALSLPLLRLLDPEDAHRLAIQGLRLLPQAAPPADQPNLSVRAFGLNFSNPVGIAAGFDKNAEAPDALLRMGFGFVEIGTVTPKPQSGNPRPRLFRLERDEAVINRMGFNNDGGEVVLRRLAARSARGGIVGVNVGANKDSEDRVADYVRLIEMFAPVASYFTVNVSSPNTPGLRNLQQAAALDDLLAKVIEARERVRAIAGDTPVLLKIAPDLTLNELDDVVHIARSRKVDGMIVANTTLSRTHTLREQARAKEQGGLSGRPLFRLSTRMVAETYVRAEGAFPLIGVGGIDSGGAALTKIRAGASLIQLYSALIYKGLGLVESIKQDLASTLLRTGRDQLSEIVGADAPMITAEDWPV</sequence>
<comment type="function">
    <text evidence="1">Catalyzes the conversion of dihydroorotate to orotate with quinone as electron acceptor.</text>
</comment>
<comment type="catalytic activity">
    <reaction evidence="1">
        <text>(S)-dihydroorotate + a quinone = orotate + a quinol</text>
        <dbReference type="Rhea" id="RHEA:30187"/>
        <dbReference type="ChEBI" id="CHEBI:24646"/>
        <dbReference type="ChEBI" id="CHEBI:30839"/>
        <dbReference type="ChEBI" id="CHEBI:30864"/>
        <dbReference type="ChEBI" id="CHEBI:132124"/>
        <dbReference type="EC" id="1.3.5.2"/>
    </reaction>
</comment>
<comment type="cofactor">
    <cofactor evidence="1">
        <name>FMN</name>
        <dbReference type="ChEBI" id="CHEBI:58210"/>
    </cofactor>
    <text evidence="1">Binds 1 FMN per subunit.</text>
</comment>
<comment type="pathway">
    <text evidence="1">Pyrimidine metabolism; UMP biosynthesis via de novo pathway; orotate from (S)-dihydroorotate (quinone route): step 1/1.</text>
</comment>
<comment type="subunit">
    <text evidence="1">Monomer.</text>
</comment>
<comment type="subcellular location">
    <subcellularLocation>
        <location evidence="1">Cell membrane</location>
        <topology evidence="1">Peripheral membrane protein</topology>
    </subcellularLocation>
</comment>
<comment type="similarity">
    <text evidence="1">Belongs to the dihydroorotate dehydrogenase family. Type 2 subfamily.</text>
</comment>
<accession>Q07TQ6</accession>
<feature type="chain" id="PRO_1000024217" description="Dihydroorotate dehydrogenase (quinone)">
    <location>
        <begin position="1"/>
        <end position="364"/>
    </location>
</feature>
<feature type="active site" description="Nucleophile" evidence="1">
    <location>
        <position position="173"/>
    </location>
</feature>
<feature type="binding site" evidence="1">
    <location>
        <begin position="61"/>
        <end position="65"/>
    </location>
    <ligand>
        <name>FMN</name>
        <dbReference type="ChEBI" id="CHEBI:58210"/>
    </ligand>
</feature>
<feature type="binding site" evidence="1">
    <location>
        <position position="65"/>
    </location>
    <ligand>
        <name>substrate</name>
    </ligand>
</feature>
<feature type="binding site" evidence="1">
    <location>
        <position position="85"/>
    </location>
    <ligand>
        <name>FMN</name>
        <dbReference type="ChEBI" id="CHEBI:58210"/>
    </ligand>
</feature>
<feature type="binding site" evidence="1">
    <location>
        <begin position="110"/>
        <end position="114"/>
    </location>
    <ligand>
        <name>substrate</name>
    </ligand>
</feature>
<feature type="binding site" evidence="1">
    <location>
        <position position="139"/>
    </location>
    <ligand>
        <name>FMN</name>
        <dbReference type="ChEBI" id="CHEBI:58210"/>
    </ligand>
</feature>
<feature type="binding site" evidence="1">
    <location>
        <position position="170"/>
    </location>
    <ligand>
        <name>FMN</name>
        <dbReference type="ChEBI" id="CHEBI:58210"/>
    </ligand>
</feature>
<feature type="binding site" evidence="1">
    <location>
        <position position="170"/>
    </location>
    <ligand>
        <name>substrate</name>
    </ligand>
</feature>
<feature type="binding site" evidence="1">
    <location>
        <position position="175"/>
    </location>
    <ligand>
        <name>substrate</name>
    </ligand>
</feature>
<feature type="binding site" evidence="1">
    <location>
        <position position="214"/>
    </location>
    <ligand>
        <name>FMN</name>
        <dbReference type="ChEBI" id="CHEBI:58210"/>
    </ligand>
</feature>
<feature type="binding site" evidence="1">
    <location>
        <position position="242"/>
    </location>
    <ligand>
        <name>FMN</name>
        <dbReference type="ChEBI" id="CHEBI:58210"/>
    </ligand>
</feature>
<feature type="binding site" evidence="1">
    <location>
        <begin position="243"/>
        <end position="244"/>
    </location>
    <ligand>
        <name>substrate</name>
    </ligand>
</feature>
<feature type="binding site" evidence="1">
    <location>
        <position position="266"/>
    </location>
    <ligand>
        <name>FMN</name>
        <dbReference type="ChEBI" id="CHEBI:58210"/>
    </ligand>
</feature>
<feature type="binding site" evidence="1">
    <location>
        <position position="295"/>
    </location>
    <ligand>
        <name>FMN</name>
        <dbReference type="ChEBI" id="CHEBI:58210"/>
    </ligand>
</feature>
<feature type="binding site" evidence="1">
    <location>
        <begin position="316"/>
        <end position="317"/>
    </location>
    <ligand>
        <name>FMN</name>
        <dbReference type="ChEBI" id="CHEBI:58210"/>
    </ligand>
</feature>
<dbReference type="EC" id="1.3.5.2" evidence="1"/>
<dbReference type="EMBL" id="CP000463">
    <property type="protein sequence ID" value="ABJ04678.1"/>
    <property type="molecule type" value="Genomic_DNA"/>
</dbReference>
<dbReference type="SMR" id="Q07TQ6"/>
<dbReference type="STRING" id="316055.RPE_0721"/>
<dbReference type="KEGG" id="rpe:RPE_0721"/>
<dbReference type="eggNOG" id="COG0167">
    <property type="taxonomic scope" value="Bacteria"/>
</dbReference>
<dbReference type="HOGENOM" id="CLU_013640_2_1_5"/>
<dbReference type="OrthoDB" id="9802377at2"/>
<dbReference type="UniPathway" id="UPA00070">
    <property type="reaction ID" value="UER00946"/>
</dbReference>
<dbReference type="GO" id="GO:0005737">
    <property type="term" value="C:cytoplasm"/>
    <property type="evidence" value="ECO:0007669"/>
    <property type="project" value="InterPro"/>
</dbReference>
<dbReference type="GO" id="GO:0005886">
    <property type="term" value="C:plasma membrane"/>
    <property type="evidence" value="ECO:0007669"/>
    <property type="project" value="UniProtKB-SubCell"/>
</dbReference>
<dbReference type="GO" id="GO:0106430">
    <property type="term" value="F:dihydroorotate dehydrogenase (quinone) activity"/>
    <property type="evidence" value="ECO:0007669"/>
    <property type="project" value="UniProtKB-EC"/>
</dbReference>
<dbReference type="GO" id="GO:0006207">
    <property type="term" value="P:'de novo' pyrimidine nucleobase biosynthetic process"/>
    <property type="evidence" value="ECO:0007669"/>
    <property type="project" value="InterPro"/>
</dbReference>
<dbReference type="GO" id="GO:0044205">
    <property type="term" value="P:'de novo' UMP biosynthetic process"/>
    <property type="evidence" value="ECO:0007669"/>
    <property type="project" value="UniProtKB-UniRule"/>
</dbReference>
<dbReference type="CDD" id="cd04738">
    <property type="entry name" value="DHOD_2_like"/>
    <property type="match status" value="1"/>
</dbReference>
<dbReference type="Gene3D" id="3.20.20.70">
    <property type="entry name" value="Aldolase class I"/>
    <property type="match status" value="1"/>
</dbReference>
<dbReference type="HAMAP" id="MF_00225">
    <property type="entry name" value="DHO_dh_type2"/>
    <property type="match status" value="1"/>
</dbReference>
<dbReference type="InterPro" id="IPR013785">
    <property type="entry name" value="Aldolase_TIM"/>
</dbReference>
<dbReference type="InterPro" id="IPR050074">
    <property type="entry name" value="DHO_dehydrogenase"/>
</dbReference>
<dbReference type="InterPro" id="IPR005719">
    <property type="entry name" value="Dihydroorotate_DH_2"/>
</dbReference>
<dbReference type="InterPro" id="IPR005720">
    <property type="entry name" value="Dihydroorotate_DH_cat"/>
</dbReference>
<dbReference type="InterPro" id="IPR001295">
    <property type="entry name" value="Dihydroorotate_DH_CS"/>
</dbReference>
<dbReference type="NCBIfam" id="NF003645">
    <property type="entry name" value="PRK05286.1-2"/>
    <property type="match status" value="1"/>
</dbReference>
<dbReference type="NCBIfam" id="NF003652">
    <property type="entry name" value="PRK05286.2-5"/>
    <property type="match status" value="1"/>
</dbReference>
<dbReference type="NCBIfam" id="TIGR01036">
    <property type="entry name" value="pyrD_sub2"/>
    <property type="match status" value="1"/>
</dbReference>
<dbReference type="PANTHER" id="PTHR48109:SF4">
    <property type="entry name" value="DIHYDROOROTATE DEHYDROGENASE (QUINONE), MITOCHONDRIAL"/>
    <property type="match status" value="1"/>
</dbReference>
<dbReference type="PANTHER" id="PTHR48109">
    <property type="entry name" value="DIHYDROOROTATE DEHYDROGENASE (QUINONE), MITOCHONDRIAL-RELATED"/>
    <property type="match status" value="1"/>
</dbReference>
<dbReference type="Pfam" id="PF01180">
    <property type="entry name" value="DHO_dh"/>
    <property type="match status" value="1"/>
</dbReference>
<dbReference type="SUPFAM" id="SSF51395">
    <property type="entry name" value="FMN-linked oxidoreductases"/>
    <property type="match status" value="1"/>
</dbReference>
<dbReference type="PROSITE" id="PS00911">
    <property type="entry name" value="DHODEHASE_1"/>
    <property type="match status" value="1"/>
</dbReference>
<dbReference type="PROSITE" id="PS00912">
    <property type="entry name" value="DHODEHASE_2"/>
    <property type="match status" value="1"/>
</dbReference>
<name>PYRD_RHOP5</name>
<evidence type="ECO:0000255" key="1">
    <source>
        <dbReference type="HAMAP-Rule" id="MF_00225"/>
    </source>
</evidence>
<keyword id="KW-1003">Cell membrane</keyword>
<keyword id="KW-0285">Flavoprotein</keyword>
<keyword id="KW-0288">FMN</keyword>
<keyword id="KW-0472">Membrane</keyword>
<keyword id="KW-0560">Oxidoreductase</keyword>
<keyword id="KW-0665">Pyrimidine biosynthesis</keyword>
<protein>
    <recommendedName>
        <fullName evidence="1">Dihydroorotate dehydrogenase (quinone)</fullName>
        <ecNumber evidence="1">1.3.5.2</ecNumber>
    </recommendedName>
    <alternativeName>
        <fullName evidence="1">DHOdehase</fullName>
        <shortName evidence="1">DHOD</shortName>
        <shortName evidence="1">DHODase</shortName>
    </alternativeName>
    <alternativeName>
        <fullName evidence="1">Dihydroorotate oxidase</fullName>
    </alternativeName>
</protein>
<gene>
    <name evidence="1" type="primary">pyrD</name>
    <name type="ordered locus">RPE_0721</name>
</gene>